<proteinExistence type="evidence at protein level"/>
<reference key="1">
    <citation type="journal article" date="1988" name="Proc. Natl. Acad. Sci. U.S.A.">
        <title>cDNA sequence encoding the 16-kDa proteolipid of chromaffin granules implies gene duplication in the evolution of H+-ATPases.</title>
        <authorList>
            <person name="Mandel M."/>
            <person name="Moriyama Y."/>
            <person name="Hulmes J.D."/>
            <person name="Pan Y.-C.E."/>
            <person name="Nelson H."/>
            <person name="Nelson N."/>
        </authorList>
    </citation>
    <scope>NUCLEOTIDE SEQUENCE [MRNA]</scope>
</reference>
<reference key="2">
    <citation type="submission" date="1988-06" db="EMBL/GenBank/DDBJ databases">
        <authorList>
            <person name="Nelson N."/>
        </authorList>
    </citation>
    <scope>SEQUENCE REVISION</scope>
</reference>
<reference key="3">
    <citation type="submission" date="2005-08" db="EMBL/GenBank/DDBJ databases">
        <authorList>
            <consortium name="NIH - Mammalian Gene Collection (MGC) project"/>
        </authorList>
    </citation>
    <scope>NUCLEOTIDE SEQUENCE [LARGE SCALE MRNA]</scope>
    <source>
        <strain>Crossbred X Angus</strain>
        <tissue>Liver</tissue>
    </source>
</reference>
<reference key="4">
    <citation type="journal article" date="1989" name="FEBS Lett.">
        <title>A 16 kDa protein co-isolating with gap junctions from brain tissue belonging to the class of proteolipids of the vacuolar H+-ATPases.</title>
        <authorList>
            <person name="Dermietzel R."/>
            <person name="Voelker M."/>
            <person name="Hwang T.K."/>
            <person name="Berzborn R.J."/>
            <person name="Meyer H.E."/>
        </authorList>
    </citation>
    <scope>PROTEIN SEQUENCE OF 7-26</scope>
    <source>
        <tissue>Brain</tissue>
    </source>
</reference>
<reference evidence="8 9" key="5">
    <citation type="journal article" date="2020" name="Nat. Commun.">
        <title>Cryo-EM structures of intact V-ATPase from bovine brain.</title>
        <authorList>
            <person name="Wang R."/>
            <person name="Long T."/>
            <person name="Hassan A."/>
            <person name="Wang J."/>
            <person name="Sun Y."/>
            <person name="Xie X.S."/>
            <person name="Li X."/>
        </authorList>
    </citation>
    <scope>STRUCTURE BY ELECTRON MICROSCOPY (3.37 ANGSTROMS)</scope>
    <scope>FUNCTION</scope>
    <scope>IDENTIFICATION IN THE V-ATPASE COMPLEX</scope>
    <scope>SUBCELLULAR LOCATION</scope>
    <scope>IDENTIFICATION BY MASS SPECTROMETRY</scope>
    <scope>TISSUE SPECIFICITY</scope>
</reference>
<dbReference type="EMBL" id="J03835">
    <property type="protein sequence ID" value="AAA30397.1"/>
    <property type="molecule type" value="mRNA"/>
</dbReference>
<dbReference type="EMBL" id="BC102659">
    <property type="protein sequence ID" value="AAI02660.1"/>
    <property type="molecule type" value="mRNA"/>
</dbReference>
<dbReference type="PIR" id="A31320">
    <property type="entry name" value="PXBOV6"/>
</dbReference>
<dbReference type="RefSeq" id="NP_001017954.1">
    <property type="nucleotide sequence ID" value="NM_001017954.1"/>
</dbReference>
<dbReference type="PDB" id="6XBW">
    <property type="method" value="EM"/>
    <property type="resolution" value="3.37 A"/>
    <property type="chains" value="c/g/k/l/m/n/o/p/q=1-155"/>
</dbReference>
<dbReference type="PDB" id="6XBY">
    <property type="method" value="EM"/>
    <property type="resolution" value="3.79 A"/>
    <property type="chains" value="c/g/k/l/m/n/o/p/q=1-155"/>
</dbReference>
<dbReference type="PDB" id="7KHR">
    <property type="method" value="EM"/>
    <property type="resolution" value="3.62 A"/>
    <property type="chains" value="c/g/k/l/m/n/o/p/q=1-155"/>
</dbReference>
<dbReference type="PDBsum" id="6XBW"/>
<dbReference type="PDBsum" id="6XBY"/>
<dbReference type="PDBsum" id="7KHR"/>
<dbReference type="EMDB" id="EMD-22121"/>
<dbReference type="EMDB" id="EMD-22122"/>
<dbReference type="EMDB" id="EMD-22880"/>
<dbReference type="SMR" id="P23956"/>
<dbReference type="CORUM" id="P23956"/>
<dbReference type="FunCoup" id="P23956">
    <property type="interactions" value="2603"/>
</dbReference>
<dbReference type="IntAct" id="P23956">
    <property type="interactions" value="1"/>
</dbReference>
<dbReference type="MINT" id="P23956"/>
<dbReference type="STRING" id="9913.ENSBTAP00000068626"/>
<dbReference type="PaxDb" id="9913-ENSBTAP00000037385"/>
<dbReference type="Ensembl" id="ENSBTAT00000037556.6">
    <property type="protein sequence ID" value="ENSBTAP00000037385.6"/>
    <property type="gene ID" value="ENSBTAG00000026428.6"/>
</dbReference>
<dbReference type="GeneID" id="550622"/>
<dbReference type="KEGG" id="bta:550622"/>
<dbReference type="CTD" id="527"/>
<dbReference type="VGNC" id="VGNC:26311">
    <property type="gene designation" value="ATP6V0C"/>
</dbReference>
<dbReference type="eggNOG" id="KOG0232">
    <property type="taxonomic scope" value="Eukaryota"/>
</dbReference>
<dbReference type="GeneTree" id="ENSGT00550000074873"/>
<dbReference type="HOGENOM" id="CLU_085752_1_2_1"/>
<dbReference type="InParanoid" id="P23956"/>
<dbReference type="OrthoDB" id="1744869at2759"/>
<dbReference type="TreeFam" id="TF300025"/>
<dbReference type="Proteomes" id="UP000009136">
    <property type="component" value="Chromosome 25"/>
</dbReference>
<dbReference type="GO" id="GO:0030665">
    <property type="term" value="C:clathrin-coated vesicle membrane"/>
    <property type="evidence" value="ECO:0007669"/>
    <property type="project" value="UniProtKB-SubCell"/>
</dbReference>
<dbReference type="GO" id="GO:0016020">
    <property type="term" value="C:membrane"/>
    <property type="evidence" value="ECO:0000318"/>
    <property type="project" value="GO_Central"/>
</dbReference>
<dbReference type="GO" id="GO:0030672">
    <property type="term" value="C:synaptic vesicle membrane"/>
    <property type="evidence" value="ECO:0007669"/>
    <property type="project" value="UniProtKB-SubCell"/>
</dbReference>
<dbReference type="GO" id="GO:0000220">
    <property type="term" value="C:vacuolar proton-transporting V-type ATPase, V0 domain"/>
    <property type="evidence" value="ECO:0000314"/>
    <property type="project" value="UniProtKB"/>
</dbReference>
<dbReference type="GO" id="GO:0046961">
    <property type="term" value="F:proton-transporting ATPase activity, rotational mechanism"/>
    <property type="evidence" value="ECO:0007669"/>
    <property type="project" value="InterPro"/>
</dbReference>
<dbReference type="GO" id="GO:0045851">
    <property type="term" value="P:pH reduction"/>
    <property type="evidence" value="ECO:0000305"/>
    <property type="project" value="UniProtKB"/>
</dbReference>
<dbReference type="GO" id="GO:1902600">
    <property type="term" value="P:proton transmembrane transport"/>
    <property type="evidence" value="ECO:0000305"/>
    <property type="project" value="UniProtKB"/>
</dbReference>
<dbReference type="CDD" id="cd18175">
    <property type="entry name" value="ATP-synt_Vo_c_ATP6C_rpt1"/>
    <property type="match status" value="1"/>
</dbReference>
<dbReference type="CDD" id="cd18176">
    <property type="entry name" value="ATP-synt_Vo_c_ATP6C_rpt2"/>
    <property type="match status" value="1"/>
</dbReference>
<dbReference type="FunFam" id="1.20.120.610:FF:000001">
    <property type="entry name" value="V-type proton ATPase proteolipid subunit"/>
    <property type="match status" value="1"/>
</dbReference>
<dbReference type="Gene3D" id="1.20.120.610">
    <property type="entry name" value="lithium bound rotor ring of v- atpase"/>
    <property type="match status" value="1"/>
</dbReference>
<dbReference type="InterPro" id="IPR002379">
    <property type="entry name" value="ATPase_proteolipid_c-like_dom"/>
</dbReference>
<dbReference type="InterPro" id="IPR000245">
    <property type="entry name" value="ATPase_proteolipid_csu"/>
</dbReference>
<dbReference type="InterPro" id="IPR011555">
    <property type="entry name" value="ATPase_proteolipid_su_C_euk"/>
</dbReference>
<dbReference type="InterPro" id="IPR035921">
    <property type="entry name" value="F/V-ATP_Csub_sf"/>
</dbReference>
<dbReference type="NCBIfam" id="TIGR01100">
    <property type="entry name" value="V_ATP_synt_C"/>
    <property type="match status" value="1"/>
</dbReference>
<dbReference type="PANTHER" id="PTHR10263">
    <property type="entry name" value="V-TYPE PROTON ATPASE PROTEOLIPID SUBUNIT"/>
    <property type="match status" value="1"/>
</dbReference>
<dbReference type="Pfam" id="PF00137">
    <property type="entry name" value="ATP-synt_C"/>
    <property type="match status" value="2"/>
</dbReference>
<dbReference type="PRINTS" id="PR00122">
    <property type="entry name" value="VACATPASE"/>
</dbReference>
<dbReference type="SUPFAM" id="SSF81333">
    <property type="entry name" value="F1F0 ATP synthase subunit C"/>
    <property type="match status" value="2"/>
</dbReference>
<keyword id="KW-0002">3D-structure</keyword>
<keyword id="KW-0968">Cytoplasmic vesicle</keyword>
<keyword id="KW-0903">Direct protein sequencing</keyword>
<keyword id="KW-0375">Hydrogen ion transport</keyword>
<keyword id="KW-0406">Ion transport</keyword>
<keyword id="KW-0472">Membrane</keyword>
<keyword id="KW-1185">Reference proteome</keyword>
<keyword id="KW-0770">Synapse</keyword>
<keyword id="KW-0812">Transmembrane</keyword>
<keyword id="KW-1133">Transmembrane helix</keyword>
<keyword id="KW-0813">Transport</keyword>
<keyword id="KW-0832">Ubl conjugation</keyword>
<gene>
    <name type="primary">ATP6V0C</name>
    <name type="synonym">ATP6C</name>
    <name type="synonym">ATP6L</name>
</gene>
<name>VATL_BOVIN</name>
<sequence>MSEAKNGPEYASFFAVMGASAAMVFSALGAAYGTAKSGTGIAAMSVMRPEMIMKSIIPVVMAGIIAIYGLVVAVLIANSLNDGISLYRSFLQLGAGLSVGLSGLAAGFAIGIVGDAGVRGTAQQPRLFVGMILILIFAEVLGLYGLIVALILSTK</sequence>
<feature type="chain" id="PRO_0000071742" description="V-type proton ATPase 16 kDa proteolipid subunit c">
    <location>
        <begin position="1"/>
        <end position="155"/>
    </location>
</feature>
<feature type="topological domain" description="Lumenal" evidence="4">
    <location>
        <begin position="1"/>
        <end position="10"/>
    </location>
</feature>
<feature type="transmembrane region" description="Helical" evidence="4">
    <location>
        <begin position="11"/>
        <end position="33"/>
    </location>
</feature>
<feature type="topological domain" description="Cytoplasmic" evidence="4">
    <location>
        <begin position="34"/>
        <end position="55"/>
    </location>
</feature>
<feature type="transmembrane region" description="Helical" evidence="4">
    <location>
        <begin position="56"/>
        <end position="76"/>
    </location>
</feature>
<feature type="topological domain" description="Lumenal" evidence="4">
    <location>
        <begin position="77"/>
        <end position="92"/>
    </location>
</feature>
<feature type="transmembrane region" description="Helical" evidence="4">
    <location>
        <begin position="93"/>
        <end position="114"/>
    </location>
</feature>
<feature type="topological domain" description="Cytoplasmic" evidence="4">
    <location>
        <begin position="115"/>
        <end position="131"/>
    </location>
</feature>
<feature type="transmembrane region" description="Helical" evidence="4">
    <location>
        <begin position="132"/>
        <end position="152"/>
    </location>
</feature>
<feature type="topological domain" description="Lumenal" evidence="4">
    <location>
        <begin position="153"/>
        <end position="155"/>
    </location>
</feature>
<feature type="site" description="Essential for proton translocation" evidence="7">
    <location>
        <position position="139"/>
    </location>
</feature>
<feature type="helix" evidence="10">
    <location>
        <begin position="9"/>
        <end position="11"/>
    </location>
</feature>
<feature type="helix" evidence="10">
    <location>
        <begin position="12"/>
        <end position="45"/>
    </location>
</feature>
<feature type="strand" evidence="10">
    <location>
        <begin position="49"/>
        <end position="54"/>
    </location>
</feature>
<feature type="helix" evidence="10">
    <location>
        <begin position="57"/>
        <end position="78"/>
    </location>
</feature>
<feature type="helix" evidence="10">
    <location>
        <begin position="86"/>
        <end position="120"/>
    </location>
</feature>
<feature type="turn" evidence="10">
    <location>
        <begin position="121"/>
        <end position="123"/>
    </location>
</feature>
<feature type="helix" evidence="10">
    <location>
        <begin position="127"/>
        <end position="154"/>
    </location>
</feature>
<comment type="function">
    <text evidence="5">Proton-conducting pore forming subunit of the V0 complex of vacuolar(H+)-ATPase (V-ATPase), a multisubunit enzyme composed of a peripheral complex (V1) that hydrolyzes ATP and a membrane integral complex (V0) that translocates protons (PubMed:32764564). V-ATPase is responsible for acidifying and maintaining the pH of intracellular compartments and in some cell types, is targeted to the plasma membrane, where it is responsible for acidifying the extracellular environment (PubMed:32764564).</text>
</comment>
<comment type="subunit">
    <text evidence="1 3 5">V-ATPase is a heteromultimeric enzyme made up of two complexes: the ATP-hydrolytic V1 complex and the proton translocation V0 complex (PubMed:32764564). The V1 complex consists of three catalytic AB heterodimers that form a heterohexamer, three peripheral stalks each consisting of EG heterodimers, one central rotor including subunits D and F, and the regulatory subunits C and H (PubMed:32764564). The proton translocation complex V0 consists of the proton transport subunit a, a ring of proteolipid subunits c9c'', rotary subunit d, subunits e and f, and the accessory subunits ATP6AP1/Ac45 and ATP6AP2/PRR (PubMed:32764564). Interacts with the V0 complex V-ATPase subunit a4 ATP6V0A4 (By similarity). Interacts with LASS2 (By similarity). Interacts with RNF182; this interaction leads to ubiquitination and degradation via the proteasome pathway (By similarity).</text>
</comment>
<comment type="subcellular location">
    <subcellularLocation>
        <location evidence="5">Cytoplasmic vesicle</location>
        <location evidence="5">Clathrin-coated vesicle membrane</location>
        <topology evidence="4">Multi-pass membrane protein</topology>
    </subcellularLocation>
    <subcellularLocation>
        <location evidence="2">Cytoplasmic vesicle</location>
        <location evidence="2">Secretory vesicle</location>
        <location evidence="2">Synaptic vesicle membrane</location>
        <topology evidence="4">Multi-pass membrane protein</topology>
    </subcellularLocation>
</comment>
<comment type="tissue specificity">
    <text evidence="5">Expressed in brain (at protein level).</text>
</comment>
<comment type="PTM">
    <text evidence="1">Ubiquitinated by RNF182, leading to its degradation via the ubiquitin-proteasome pathway.</text>
</comment>
<comment type="similarity">
    <text evidence="6">Belongs to the V-ATPase proteolipid subunit family.</text>
</comment>
<evidence type="ECO:0000250" key="1">
    <source>
        <dbReference type="UniProtKB" id="P27449"/>
    </source>
</evidence>
<evidence type="ECO:0000250" key="2">
    <source>
        <dbReference type="UniProtKB" id="P63081"/>
    </source>
</evidence>
<evidence type="ECO:0000250" key="3">
    <source>
        <dbReference type="UniProtKB" id="P63082"/>
    </source>
</evidence>
<evidence type="ECO:0000255" key="4"/>
<evidence type="ECO:0000269" key="5">
    <source>
    </source>
</evidence>
<evidence type="ECO:0000305" key="6"/>
<evidence type="ECO:0000305" key="7">
    <source>
    </source>
</evidence>
<evidence type="ECO:0007744" key="8">
    <source>
        <dbReference type="PDB" id="6XBW"/>
    </source>
</evidence>
<evidence type="ECO:0007744" key="9">
    <source>
        <dbReference type="PDB" id="6XBY"/>
    </source>
</evidence>
<evidence type="ECO:0007829" key="10">
    <source>
        <dbReference type="PDB" id="6XBW"/>
    </source>
</evidence>
<protein>
    <recommendedName>
        <fullName evidence="6">V-type proton ATPase 16 kDa proteolipid subunit c</fullName>
        <shortName evidence="6">V-ATPase 16 kDa proteolipid subunit c</shortName>
    </recommendedName>
    <alternativeName>
        <fullName evidence="6">Vacuolar proton pump 16 kDa proteolipid subunit c</fullName>
    </alternativeName>
</protein>
<accession>P23956</accession>
<accession>Q3SZY0</accession>
<organism>
    <name type="scientific">Bos taurus</name>
    <name type="common">Bovine</name>
    <dbReference type="NCBI Taxonomy" id="9913"/>
    <lineage>
        <taxon>Eukaryota</taxon>
        <taxon>Metazoa</taxon>
        <taxon>Chordata</taxon>
        <taxon>Craniata</taxon>
        <taxon>Vertebrata</taxon>
        <taxon>Euteleostomi</taxon>
        <taxon>Mammalia</taxon>
        <taxon>Eutheria</taxon>
        <taxon>Laurasiatheria</taxon>
        <taxon>Artiodactyla</taxon>
        <taxon>Ruminantia</taxon>
        <taxon>Pecora</taxon>
        <taxon>Bovidae</taxon>
        <taxon>Bovinae</taxon>
        <taxon>Bos</taxon>
    </lineage>
</organism>